<keyword id="KW-0963">Cytoplasm</keyword>
<keyword id="KW-0444">Lipid biosynthesis</keyword>
<keyword id="KW-0443">Lipid metabolism</keyword>
<keyword id="KW-0479">Metal-binding</keyword>
<keyword id="KW-0520">NAD</keyword>
<keyword id="KW-0521">NADP</keyword>
<keyword id="KW-0560">Oxidoreductase</keyword>
<keyword id="KW-0594">Phospholipid biosynthesis</keyword>
<keyword id="KW-1208">Phospholipid metabolism</keyword>
<keyword id="KW-0862">Zinc</keyword>
<gene>
    <name evidence="1" type="primary">egsA</name>
    <name type="ordered locus">M1627_1432</name>
</gene>
<dbReference type="EC" id="1.1.1.261" evidence="1"/>
<dbReference type="EMBL" id="CP001401">
    <property type="protein sequence ID" value="ACP55315.1"/>
    <property type="molecule type" value="Genomic_DNA"/>
</dbReference>
<dbReference type="RefSeq" id="WP_012711381.1">
    <property type="nucleotide sequence ID" value="NC_012632.1"/>
</dbReference>
<dbReference type="SMR" id="C3N5P0"/>
<dbReference type="KEGG" id="sim:M1627_1432"/>
<dbReference type="HOGENOM" id="CLU_038362_0_0_2"/>
<dbReference type="UniPathway" id="UPA00940"/>
<dbReference type="Proteomes" id="UP000002307">
    <property type="component" value="Chromosome"/>
</dbReference>
<dbReference type="GO" id="GO:0005737">
    <property type="term" value="C:cytoplasm"/>
    <property type="evidence" value="ECO:0007669"/>
    <property type="project" value="UniProtKB-SubCell"/>
</dbReference>
<dbReference type="GO" id="GO:0106357">
    <property type="term" value="F:glycerol-1-phosphate dehydrogenase (NAD+) activity"/>
    <property type="evidence" value="ECO:0007669"/>
    <property type="project" value="RHEA"/>
</dbReference>
<dbReference type="GO" id="GO:0106358">
    <property type="term" value="F:glycerol-1-phosphate dehydrogenase (NADP+) activity"/>
    <property type="evidence" value="ECO:0007669"/>
    <property type="project" value="RHEA"/>
</dbReference>
<dbReference type="GO" id="GO:0046872">
    <property type="term" value="F:metal ion binding"/>
    <property type="evidence" value="ECO:0007669"/>
    <property type="project" value="UniProtKB-KW"/>
</dbReference>
<dbReference type="GO" id="GO:0006650">
    <property type="term" value="P:glycerophospholipid metabolic process"/>
    <property type="evidence" value="ECO:0007669"/>
    <property type="project" value="UniProtKB-UniRule"/>
</dbReference>
<dbReference type="GO" id="GO:0008654">
    <property type="term" value="P:phospholipid biosynthetic process"/>
    <property type="evidence" value="ECO:0007669"/>
    <property type="project" value="UniProtKB-KW"/>
</dbReference>
<dbReference type="CDD" id="cd08173">
    <property type="entry name" value="Gro1PDH"/>
    <property type="match status" value="1"/>
</dbReference>
<dbReference type="Gene3D" id="3.40.50.1970">
    <property type="match status" value="1"/>
</dbReference>
<dbReference type="Gene3D" id="1.20.1090.10">
    <property type="entry name" value="Dehydroquinate synthase-like - alpha domain"/>
    <property type="match status" value="1"/>
</dbReference>
<dbReference type="HAMAP" id="MF_00497_A">
    <property type="entry name" value="G1P_dehydrogenase_A"/>
    <property type="match status" value="1"/>
</dbReference>
<dbReference type="InterPro" id="IPR023002">
    <property type="entry name" value="G1P_dehydrogenase_arc"/>
</dbReference>
<dbReference type="InterPro" id="IPR032837">
    <property type="entry name" value="G1PDH"/>
</dbReference>
<dbReference type="InterPro" id="IPR016205">
    <property type="entry name" value="Glycerol_DH"/>
</dbReference>
<dbReference type="NCBIfam" id="NF002022">
    <property type="entry name" value="PRK00843.1"/>
    <property type="match status" value="1"/>
</dbReference>
<dbReference type="PANTHER" id="PTHR43616">
    <property type="entry name" value="GLYCEROL DEHYDROGENASE"/>
    <property type="match status" value="1"/>
</dbReference>
<dbReference type="PANTHER" id="PTHR43616:SF5">
    <property type="entry name" value="GLYCEROL DEHYDROGENASE 1"/>
    <property type="match status" value="1"/>
</dbReference>
<dbReference type="Pfam" id="PF13685">
    <property type="entry name" value="Fe-ADH_2"/>
    <property type="match status" value="1"/>
</dbReference>
<dbReference type="PIRSF" id="PIRSF000112">
    <property type="entry name" value="Glycerol_dehydrogenase"/>
    <property type="match status" value="1"/>
</dbReference>
<dbReference type="SUPFAM" id="SSF56796">
    <property type="entry name" value="Dehydroquinate synthase-like"/>
    <property type="match status" value="1"/>
</dbReference>
<reference key="1">
    <citation type="journal article" date="2009" name="Proc. Natl. Acad. Sci. U.S.A.">
        <title>Biogeography of the Sulfolobus islandicus pan-genome.</title>
        <authorList>
            <person name="Reno M.L."/>
            <person name="Held N.L."/>
            <person name="Fields C.J."/>
            <person name="Burke P.V."/>
            <person name="Whitaker R.J."/>
        </authorList>
    </citation>
    <scope>NUCLEOTIDE SEQUENCE [LARGE SCALE GENOMIC DNA]</scope>
    <source>
        <strain>M.16.27</strain>
    </source>
</reference>
<organism>
    <name type="scientific">Saccharolobus islandicus (strain M.16.27)</name>
    <name type="common">Sulfolobus islandicus</name>
    <dbReference type="NCBI Taxonomy" id="427318"/>
    <lineage>
        <taxon>Archaea</taxon>
        <taxon>Thermoproteota</taxon>
        <taxon>Thermoprotei</taxon>
        <taxon>Sulfolobales</taxon>
        <taxon>Sulfolobaceae</taxon>
        <taxon>Saccharolobus</taxon>
    </lineage>
</organism>
<feature type="chain" id="PRO_1000206476" description="Glycerol-1-phosphate dehydrogenase [NAD(P)+]">
    <location>
        <begin position="1"/>
        <end position="351"/>
    </location>
</feature>
<feature type="binding site" evidence="1">
    <location>
        <begin position="97"/>
        <end position="101"/>
    </location>
    <ligand>
        <name>NAD(+)</name>
        <dbReference type="ChEBI" id="CHEBI:57540"/>
    </ligand>
</feature>
<feature type="binding site" evidence="1">
    <location>
        <begin position="119"/>
        <end position="122"/>
    </location>
    <ligand>
        <name>NAD(+)</name>
        <dbReference type="ChEBI" id="CHEBI:57540"/>
    </ligand>
</feature>
<feature type="binding site" evidence="1">
    <location>
        <position position="124"/>
    </location>
    <ligand>
        <name>substrate</name>
    </ligand>
</feature>
<feature type="binding site" evidence="1">
    <location>
        <position position="128"/>
    </location>
    <ligand>
        <name>NAD(+)</name>
        <dbReference type="ChEBI" id="CHEBI:57540"/>
    </ligand>
</feature>
<feature type="binding site" evidence="1">
    <location>
        <position position="171"/>
    </location>
    <ligand>
        <name>substrate</name>
    </ligand>
</feature>
<feature type="binding site" evidence="1">
    <location>
        <position position="171"/>
    </location>
    <ligand>
        <name>Zn(2+)</name>
        <dbReference type="ChEBI" id="CHEBI:29105"/>
        <note>catalytic</note>
    </ligand>
</feature>
<feature type="binding site" evidence="1">
    <location>
        <position position="251"/>
    </location>
    <ligand>
        <name>Zn(2+)</name>
        <dbReference type="ChEBI" id="CHEBI:29105"/>
        <note>catalytic</note>
    </ligand>
</feature>
<feature type="binding site" evidence="1">
    <location>
        <position position="255"/>
    </location>
    <ligand>
        <name>substrate</name>
    </ligand>
</feature>
<feature type="binding site" evidence="1">
    <location>
        <position position="267"/>
    </location>
    <ligand>
        <name>Zn(2+)</name>
        <dbReference type="ChEBI" id="CHEBI:29105"/>
        <note>catalytic</note>
    </ligand>
</feature>
<proteinExistence type="inferred from homology"/>
<sequence>MNVKEHVISLPRRVFVGHDIIYDISIYFSQLGITSPFLIVTGTKYTKKIADKVIENLPKDAKYEVIEIDTATLDDVYKVEEVVKKVNPNILLGIGGGKVIDVTKYAAFRNNLEFVSIPTSPSHDGITSPFASIKGLQKPVSVKAKEPLAIIADIEILSLSPRRLINAGIGDTIGKIIAVRDWRLAAKLRGEYYGDYTASLALMSAKHAFQCTKIINKDIKYGVRMLIEALISSGVAMGMAGSTRPASGSEHLFAHAVELLHPEGVLHGELVGLGTIIMAYLHGINWKIIRDRLKKIGFPVKAKDLGLSDEEVIKALTIAHTIRPERYTILGDRGLTWSSAEKIARVTKIID</sequence>
<evidence type="ECO:0000255" key="1">
    <source>
        <dbReference type="HAMAP-Rule" id="MF_00497"/>
    </source>
</evidence>
<comment type="function">
    <text evidence="1">Catalyzes the NAD(P)H-dependent reduction of dihydroxyacetonephosphate (DHAP or glycerone phosphate) to glycerol 1-phosphate (G1P). The G1P thus generated is used as the glycerophosphate backbone of phospholipids in the cellular membranes of Archaea.</text>
</comment>
<comment type="catalytic activity">
    <reaction evidence="1">
        <text>sn-glycerol 1-phosphate + NAD(+) = dihydroxyacetone phosphate + NADH + H(+)</text>
        <dbReference type="Rhea" id="RHEA:21412"/>
        <dbReference type="ChEBI" id="CHEBI:15378"/>
        <dbReference type="ChEBI" id="CHEBI:57540"/>
        <dbReference type="ChEBI" id="CHEBI:57642"/>
        <dbReference type="ChEBI" id="CHEBI:57685"/>
        <dbReference type="ChEBI" id="CHEBI:57945"/>
        <dbReference type="EC" id="1.1.1.261"/>
    </reaction>
</comment>
<comment type="catalytic activity">
    <reaction evidence="1">
        <text>sn-glycerol 1-phosphate + NADP(+) = dihydroxyacetone phosphate + NADPH + H(+)</text>
        <dbReference type="Rhea" id="RHEA:21416"/>
        <dbReference type="ChEBI" id="CHEBI:15378"/>
        <dbReference type="ChEBI" id="CHEBI:57642"/>
        <dbReference type="ChEBI" id="CHEBI:57685"/>
        <dbReference type="ChEBI" id="CHEBI:57783"/>
        <dbReference type="ChEBI" id="CHEBI:58349"/>
        <dbReference type="EC" id="1.1.1.261"/>
    </reaction>
</comment>
<comment type="cofactor">
    <cofactor evidence="1">
        <name>Zn(2+)</name>
        <dbReference type="ChEBI" id="CHEBI:29105"/>
    </cofactor>
    <text evidence="1">Binds 1 zinc ion per subunit.</text>
</comment>
<comment type="pathway">
    <text evidence="1">Membrane lipid metabolism; glycerophospholipid metabolism.</text>
</comment>
<comment type="subunit">
    <text evidence="1">Homodimer.</text>
</comment>
<comment type="subcellular location">
    <subcellularLocation>
        <location evidence="1">Cytoplasm</location>
    </subcellularLocation>
</comment>
<comment type="similarity">
    <text evidence="1">Belongs to the glycerol-1-phosphate dehydrogenase family.</text>
</comment>
<protein>
    <recommendedName>
        <fullName evidence="1">Glycerol-1-phosphate dehydrogenase [NAD(P)+]</fullName>
        <shortName evidence="1">G1P dehydrogenase</shortName>
        <shortName evidence="1">G1PDH</shortName>
        <ecNumber evidence="1">1.1.1.261</ecNumber>
    </recommendedName>
    <alternativeName>
        <fullName evidence="1">Enantiomeric glycerophosphate synthase</fullName>
    </alternativeName>
    <alternativeName>
        <fullName evidence="1">sn-glycerol-1-phosphate dehydrogenase</fullName>
    </alternativeName>
</protein>
<name>G1PDH_SACI3</name>
<accession>C3N5P0</accession>